<comment type="function">
    <text evidence="3">Component of neuronal acetylcholine receptors (nAChRs) that function as pentameric, ligand-gated cation channels with high calcium permeability among other activities. nAChRs are excitatory neurotrasnmitter receptors formed by a collection of nAChR subunits known to mediate synaptic transmission in the nervous system and the neuromuscular junction. Each nAchR subunit confers differential attributes to channel properties, including activation, deactivation and desensitization kinetics, pH sensitivity, cation permeability, and binding to allosteric modulators. Has an accessory rather than functional role and is only able to form functional nAChRs when co-assembled with another beta subunit. Participates in pentameric assemblies along with CHRNA3, CHRNA4, CHRNA6, CHRNB2 and CHRNB4. Modulates receptor assembly and increases receptor sensitivity to nicotine when associated with CHRNB2, CHRNA4 and/or CHRNA6 as well as CHRNA3 and CHRNB4. Seems to play a role in nicotine addiction.</text>
</comment>
<comment type="catalytic activity">
    <reaction evidence="2">
        <text>Ca(2+)(in) = Ca(2+)(out)</text>
        <dbReference type="Rhea" id="RHEA:29671"/>
        <dbReference type="ChEBI" id="CHEBI:29108"/>
    </reaction>
</comment>
<comment type="catalytic activity">
    <reaction evidence="2">
        <text>K(+)(in) = K(+)(out)</text>
        <dbReference type="Rhea" id="RHEA:29463"/>
        <dbReference type="ChEBI" id="CHEBI:29103"/>
    </reaction>
</comment>
<comment type="catalytic activity">
    <reaction evidence="2">
        <text>Na(+)(in) = Na(+)(out)</text>
        <dbReference type="Rhea" id="RHEA:34963"/>
        <dbReference type="ChEBI" id="CHEBI:29101"/>
    </reaction>
</comment>
<comment type="activity regulation">
    <text evidence="3">Activated by a myriad of ligands such as acetylcholine, cytisine, nicotine, choline and epibatidine.</text>
</comment>
<comment type="subunit">
    <text evidence="3">Neuronal AChR seems to be composed of two different type of subunits: alpha and beta. CHRNB3/beta-3 subunit is only able to form functional nAChRs when co-assembled with another beta subunit. Participates in pentameric assemblies along with CHRNA4/alpha-4 and CHRNB2/beta-2 subunits and with CHRNA6/alpha-6 as well, forming stoichiometries such as (CHRNA3:CHRNB4)2:CHRNB3, (CHRNA4:CHRNB2)2:CHRNB3 or (CHRNA6:CHRNB2)2:CHRNB3.</text>
</comment>
<comment type="subcellular location">
    <subcellularLocation>
        <location evidence="1">Synaptic cell membrane</location>
        <topology evidence="4">Multi-pass membrane protein</topology>
    </subcellularLocation>
    <subcellularLocation>
        <location evidence="1">Cell membrane</location>
        <topology evidence="4">Multi-pass membrane protein</topology>
    </subcellularLocation>
</comment>
<comment type="similarity">
    <text evidence="5">Belongs to the ligand-gated ion channel (TC 1.A.9) family. Acetylcholine receptor (TC 1.A.9.1) subfamily. Beta-3/CHRNB3 sub-subfamily.</text>
</comment>
<accession>P12391</accession>
<organism>
    <name type="scientific">Rattus norvegicus</name>
    <name type="common">Rat</name>
    <dbReference type="NCBI Taxonomy" id="10116"/>
    <lineage>
        <taxon>Eukaryota</taxon>
        <taxon>Metazoa</taxon>
        <taxon>Chordata</taxon>
        <taxon>Craniata</taxon>
        <taxon>Vertebrata</taxon>
        <taxon>Euteleostomi</taxon>
        <taxon>Mammalia</taxon>
        <taxon>Eutheria</taxon>
        <taxon>Euarchontoglires</taxon>
        <taxon>Glires</taxon>
        <taxon>Rodentia</taxon>
        <taxon>Myomorpha</taxon>
        <taxon>Muroidea</taxon>
        <taxon>Muridae</taxon>
        <taxon>Murinae</taxon>
        <taxon>Rattus</taxon>
    </lineage>
</organism>
<feature type="signal peptide" evidence="4">
    <location>
        <begin position="1"/>
        <end position="30"/>
    </location>
</feature>
<feature type="chain" id="PRO_0000000386" description="Neuronal acetylcholine receptor subunit beta-3">
    <location>
        <begin position="31"/>
        <end position="464"/>
    </location>
</feature>
<feature type="topological domain" description="Extracellular" evidence="4">
    <location>
        <begin position="31"/>
        <end position="238"/>
    </location>
</feature>
<feature type="transmembrane region" description="Helical" evidence="4">
    <location>
        <begin position="239"/>
        <end position="263"/>
    </location>
</feature>
<feature type="transmembrane region" description="Helical" evidence="4">
    <location>
        <begin position="271"/>
        <end position="288"/>
    </location>
</feature>
<feature type="transmembrane region" description="Helical" evidence="4">
    <location>
        <begin position="305"/>
        <end position="326"/>
    </location>
</feature>
<feature type="topological domain" description="Cytoplasmic" evidence="4">
    <location>
        <begin position="327"/>
        <end position="434"/>
    </location>
</feature>
<feature type="transmembrane region" description="Helical" evidence="4">
    <location>
        <begin position="435"/>
        <end position="453"/>
    </location>
</feature>
<feature type="glycosylation site" description="N-linked (GlcNAc...) asparagine" evidence="4">
    <location>
        <position position="55"/>
    </location>
</feature>
<feature type="glycosylation site" description="N-linked (GlcNAc...) asparagine" evidence="4">
    <location>
        <position position="172"/>
    </location>
</feature>
<feature type="disulfide bond" evidence="3">
    <location>
        <begin position="159"/>
        <end position="173"/>
    </location>
</feature>
<sequence>MTGFLRVFLVLSATLSGSWVTLTATAGLSSVAEHEDALLRHLFQGYQKWVRPVLNSSDIIKVYFGLKISQLVDVDEKNQLMTTNVWLKQEWTDQKLRWNPEEYGGINSIKVPSESLWLPDIVLFENADGRFEGSLMTKAIVKSSGTVSWTPPASYKSSCTMDVTFFPFDRQNCSMKFGSWTYDGTMVDLILINENVDRKDFFDNGEWEILNAKGMKGNRREGFYSYPFVTYSFVLRRLPLFYTLFLIIPCLGLSFLTVLVFYLPSDEGEKLSLSTSVLVSLTVFLLVIEEIIPSSSKVIPLIGEYLLFIMIFVTLSIIVTVFVINVHHRSSSTYHPMAPWVKRLFLQRLPRWLCMKDPMDRFSFPDGKESDTAVRGKVSGKRKQTPASDGERVLVAFLEKASESIRYISRHVKKEHFISQVVQDWKFVAQVLDRIFLWLFLIASVLGSILIFIPALKMWIHRFH</sequence>
<dbReference type="EMBL" id="J04636">
    <property type="protein sequence ID" value="AAC28887.1"/>
    <property type="molecule type" value="mRNA"/>
</dbReference>
<dbReference type="PIR" id="A33523">
    <property type="entry name" value="A33523"/>
</dbReference>
<dbReference type="RefSeq" id="NP_598281.1">
    <property type="nucleotide sequence ID" value="NM_133597.2"/>
</dbReference>
<dbReference type="SMR" id="P12391"/>
<dbReference type="ComplexPortal" id="CPX-203">
    <property type="entry name" value="Neuronal nicotinic acetylcholine receptor complex, alpha3-alpha6-beta2-beta3"/>
</dbReference>
<dbReference type="FunCoup" id="P12391">
    <property type="interactions" value="17"/>
</dbReference>
<dbReference type="STRING" id="10116.ENSRNOP00000016656"/>
<dbReference type="BindingDB" id="P12391"/>
<dbReference type="ChEMBL" id="CHEMBL3137275"/>
<dbReference type="ChEMBL" id="CHEMBL3883329"/>
<dbReference type="DrugCentral" id="P12391"/>
<dbReference type="GlyCosmos" id="P12391">
    <property type="glycosylation" value="2 sites, No reported glycans"/>
</dbReference>
<dbReference type="GlyGen" id="P12391">
    <property type="glycosylation" value="2 sites"/>
</dbReference>
<dbReference type="PhosphoSitePlus" id="P12391"/>
<dbReference type="PaxDb" id="10116-ENSRNOP00000016656"/>
<dbReference type="Ensembl" id="ENSRNOT00000016656.5">
    <property type="protein sequence ID" value="ENSRNOP00000016656.3"/>
    <property type="gene ID" value="ENSRNOG00000012448.7"/>
</dbReference>
<dbReference type="GeneID" id="171131"/>
<dbReference type="KEGG" id="rno:171131"/>
<dbReference type="UCSC" id="RGD:621544">
    <property type="organism name" value="rat"/>
</dbReference>
<dbReference type="AGR" id="RGD:621544"/>
<dbReference type="CTD" id="1142"/>
<dbReference type="RGD" id="621544">
    <property type="gene designation" value="Chrnb3"/>
</dbReference>
<dbReference type="eggNOG" id="KOG3645">
    <property type="taxonomic scope" value="Eukaryota"/>
</dbReference>
<dbReference type="GeneTree" id="ENSGT00940000156892"/>
<dbReference type="HOGENOM" id="CLU_018074_1_2_1"/>
<dbReference type="InParanoid" id="P12391"/>
<dbReference type="OMA" id="QMWASIV"/>
<dbReference type="OrthoDB" id="5975154at2759"/>
<dbReference type="PhylomeDB" id="P12391"/>
<dbReference type="TreeFam" id="TF315605"/>
<dbReference type="Reactome" id="R-RNO-629594">
    <property type="pathway name" value="Highly calcium permeable postsynaptic nicotinic acetylcholine receptors"/>
</dbReference>
<dbReference type="Reactome" id="R-RNO-629597">
    <property type="pathway name" value="Highly calcium permeable nicotinic acetylcholine receptors"/>
</dbReference>
<dbReference type="PRO" id="PR:P12391"/>
<dbReference type="Proteomes" id="UP000002494">
    <property type="component" value="Chromosome 16"/>
</dbReference>
<dbReference type="Bgee" id="ENSRNOG00000012448">
    <property type="expression patterns" value="Expressed in testis and 3 other cell types or tissues"/>
</dbReference>
<dbReference type="GO" id="GO:0005892">
    <property type="term" value="C:acetylcholine-gated channel complex"/>
    <property type="evidence" value="ECO:0000314"/>
    <property type="project" value="RGD"/>
</dbReference>
<dbReference type="GO" id="GO:0034703">
    <property type="term" value="C:cation channel complex"/>
    <property type="evidence" value="ECO:0007669"/>
    <property type="project" value="Ensembl"/>
</dbReference>
<dbReference type="GO" id="GO:0098691">
    <property type="term" value="C:dopaminergic synapse"/>
    <property type="evidence" value="ECO:0000266"/>
    <property type="project" value="RGD"/>
</dbReference>
<dbReference type="GO" id="GO:0043005">
    <property type="term" value="C:neuron projection"/>
    <property type="evidence" value="ECO:0000318"/>
    <property type="project" value="GO_Central"/>
</dbReference>
<dbReference type="GO" id="GO:0098878">
    <property type="term" value="C:neurotransmitter receptor complex"/>
    <property type="evidence" value="ECO:0007669"/>
    <property type="project" value="Ensembl"/>
</dbReference>
<dbReference type="GO" id="GO:0005886">
    <property type="term" value="C:plasma membrane"/>
    <property type="evidence" value="ECO:0000318"/>
    <property type="project" value="GO_Central"/>
</dbReference>
<dbReference type="GO" id="GO:0045211">
    <property type="term" value="C:postsynaptic membrane"/>
    <property type="evidence" value="ECO:0007669"/>
    <property type="project" value="UniProtKB-KW"/>
</dbReference>
<dbReference type="GO" id="GO:0098793">
    <property type="term" value="C:presynapse"/>
    <property type="evidence" value="ECO:0007669"/>
    <property type="project" value="GOC"/>
</dbReference>
<dbReference type="GO" id="GO:0032991">
    <property type="term" value="C:protein-containing complex"/>
    <property type="evidence" value="ECO:0000314"/>
    <property type="project" value="RGD"/>
</dbReference>
<dbReference type="GO" id="GO:0045202">
    <property type="term" value="C:synapse"/>
    <property type="evidence" value="ECO:0000318"/>
    <property type="project" value="GO_Central"/>
</dbReference>
<dbReference type="GO" id="GO:0042166">
    <property type="term" value="F:acetylcholine binding"/>
    <property type="evidence" value="ECO:0000314"/>
    <property type="project" value="RGD"/>
</dbReference>
<dbReference type="GO" id="GO:0022848">
    <property type="term" value="F:acetylcholine-gated monoatomic cation-selective channel activity"/>
    <property type="evidence" value="ECO:0000318"/>
    <property type="project" value="GO_Central"/>
</dbReference>
<dbReference type="GO" id="GO:0004888">
    <property type="term" value="F:transmembrane signaling receptor activity"/>
    <property type="evidence" value="ECO:0007669"/>
    <property type="project" value="InterPro"/>
</dbReference>
<dbReference type="GO" id="GO:0095500">
    <property type="term" value="P:acetylcholine receptor signaling pathway"/>
    <property type="evidence" value="ECO:0000318"/>
    <property type="project" value="GO_Central"/>
</dbReference>
<dbReference type="GO" id="GO:0051899">
    <property type="term" value="P:membrane depolarization"/>
    <property type="evidence" value="ECO:0000318"/>
    <property type="project" value="GO_Central"/>
</dbReference>
<dbReference type="GO" id="GO:0034220">
    <property type="term" value="P:monoatomic ion transmembrane transport"/>
    <property type="evidence" value="ECO:0000318"/>
    <property type="project" value="GO_Central"/>
</dbReference>
<dbReference type="GO" id="GO:0007274">
    <property type="term" value="P:neuromuscular synaptic transmission"/>
    <property type="evidence" value="ECO:0000318"/>
    <property type="project" value="GO_Central"/>
</dbReference>
<dbReference type="GO" id="GO:0099171">
    <property type="term" value="P:presynaptic modulation of chemical synaptic transmission"/>
    <property type="evidence" value="ECO:0000266"/>
    <property type="project" value="RGD"/>
</dbReference>
<dbReference type="GO" id="GO:0035094">
    <property type="term" value="P:response to nicotine"/>
    <property type="evidence" value="ECO:0000318"/>
    <property type="project" value="GO_Central"/>
</dbReference>
<dbReference type="GO" id="GO:0007271">
    <property type="term" value="P:synaptic transmission, cholinergic"/>
    <property type="evidence" value="ECO:0000318"/>
    <property type="project" value="GO_Central"/>
</dbReference>
<dbReference type="CDD" id="cd19064">
    <property type="entry name" value="LGIC_TM_nAChR"/>
    <property type="match status" value="1"/>
</dbReference>
<dbReference type="FunFam" id="2.70.170.10:FF:000005">
    <property type="entry name" value="Neuronal nicotinic acetylcholine receptor alpha4 subunit"/>
    <property type="match status" value="1"/>
</dbReference>
<dbReference type="FunFam" id="1.20.58.390:FF:000001">
    <property type="entry name" value="Neuronal nicotinic acetylcholine receptor subunit 3"/>
    <property type="match status" value="1"/>
</dbReference>
<dbReference type="Gene3D" id="2.70.170.10">
    <property type="entry name" value="Neurotransmitter-gated ion-channel ligand-binding domain"/>
    <property type="match status" value="1"/>
</dbReference>
<dbReference type="Gene3D" id="1.20.58.390">
    <property type="entry name" value="Neurotransmitter-gated ion-channel transmembrane domain"/>
    <property type="match status" value="2"/>
</dbReference>
<dbReference type="InterPro" id="IPR006202">
    <property type="entry name" value="Neur_chan_lig-bd"/>
</dbReference>
<dbReference type="InterPro" id="IPR036734">
    <property type="entry name" value="Neur_chan_lig-bd_sf"/>
</dbReference>
<dbReference type="InterPro" id="IPR006201">
    <property type="entry name" value="Neur_channel"/>
</dbReference>
<dbReference type="InterPro" id="IPR036719">
    <property type="entry name" value="Neuro-gated_channel_TM_sf"/>
</dbReference>
<dbReference type="InterPro" id="IPR038050">
    <property type="entry name" value="Neuro_actylchol_rec"/>
</dbReference>
<dbReference type="InterPro" id="IPR006029">
    <property type="entry name" value="Neurotrans-gated_channel_TM"/>
</dbReference>
<dbReference type="InterPro" id="IPR018000">
    <property type="entry name" value="Neurotransmitter_ion_chnl_CS"/>
</dbReference>
<dbReference type="InterPro" id="IPR002394">
    <property type="entry name" value="Nicotinic_acetylcholine_rcpt"/>
</dbReference>
<dbReference type="NCBIfam" id="TIGR00860">
    <property type="entry name" value="LIC"/>
    <property type="match status" value="1"/>
</dbReference>
<dbReference type="PANTHER" id="PTHR18945">
    <property type="entry name" value="NEUROTRANSMITTER GATED ION CHANNEL"/>
    <property type="match status" value="1"/>
</dbReference>
<dbReference type="Pfam" id="PF02931">
    <property type="entry name" value="Neur_chan_LBD"/>
    <property type="match status" value="1"/>
</dbReference>
<dbReference type="Pfam" id="PF02932">
    <property type="entry name" value="Neur_chan_memb"/>
    <property type="match status" value="1"/>
</dbReference>
<dbReference type="PRINTS" id="PR00254">
    <property type="entry name" value="NICOTINICR"/>
</dbReference>
<dbReference type="PRINTS" id="PR00252">
    <property type="entry name" value="NRIONCHANNEL"/>
</dbReference>
<dbReference type="SUPFAM" id="SSF90112">
    <property type="entry name" value="Neurotransmitter-gated ion-channel transmembrane pore"/>
    <property type="match status" value="1"/>
</dbReference>
<dbReference type="SUPFAM" id="SSF63712">
    <property type="entry name" value="Nicotinic receptor ligand binding domain-like"/>
    <property type="match status" value="1"/>
</dbReference>
<dbReference type="PROSITE" id="PS00236">
    <property type="entry name" value="NEUROTR_ION_CHANNEL"/>
    <property type="match status" value="1"/>
</dbReference>
<reference key="1">
    <citation type="journal article" date="1989" name="J. Biol. Chem.">
        <title>Beta 3: a new member of nicotinic acetylcholine receptor gene family is expressed in brain.</title>
        <authorList>
            <person name="Deneris E.S."/>
            <person name="Boulter J."/>
            <person name="Swanson L.W."/>
            <person name="Patrick J."/>
            <person name="Heinemann S.F."/>
        </authorList>
    </citation>
    <scope>NUCLEOTIDE SEQUENCE [MRNA]</scope>
</reference>
<proteinExistence type="evidence at transcript level"/>
<gene>
    <name type="primary">Chrnb3</name>
    <name type="synonym">Acrb3</name>
</gene>
<keyword id="KW-1003">Cell membrane</keyword>
<keyword id="KW-1015">Disulfide bond</keyword>
<keyword id="KW-0325">Glycoprotein</keyword>
<keyword id="KW-0407">Ion channel</keyword>
<keyword id="KW-0406">Ion transport</keyword>
<keyword id="KW-1071">Ligand-gated ion channel</keyword>
<keyword id="KW-0472">Membrane</keyword>
<keyword id="KW-0675">Receptor</keyword>
<keyword id="KW-1185">Reference proteome</keyword>
<keyword id="KW-0732">Signal</keyword>
<keyword id="KW-0770">Synapse</keyword>
<keyword id="KW-0812">Transmembrane</keyword>
<keyword id="KW-1133">Transmembrane helix</keyword>
<keyword id="KW-0813">Transport</keyword>
<protein>
    <recommendedName>
        <fullName>Neuronal acetylcholine receptor subunit beta-3</fullName>
    </recommendedName>
</protein>
<evidence type="ECO:0000250" key="1">
    <source>
        <dbReference type="UniProtKB" id="O70174"/>
    </source>
</evidence>
<evidence type="ECO:0000250" key="2">
    <source>
        <dbReference type="UniProtKB" id="P04758"/>
    </source>
</evidence>
<evidence type="ECO:0000250" key="3">
    <source>
        <dbReference type="UniProtKB" id="Q05901"/>
    </source>
</evidence>
<evidence type="ECO:0000255" key="4"/>
<evidence type="ECO:0000305" key="5"/>
<name>ACHB3_RAT</name>